<organism>
    <name type="scientific">Campylobacter jejuni subsp. doylei (strain ATCC BAA-1458 / RM4099 / 269.97)</name>
    <dbReference type="NCBI Taxonomy" id="360109"/>
    <lineage>
        <taxon>Bacteria</taxon>
        <taxon>Pseudomonadati</taxon>
        <taxon>Campylobacterota</taxon>
        <taxon>Epsilonproteobacteria</taxon>
        <taxon>Campylobacterales</taxon>
        <taxon>Campylobacteraceae</taxon>
        <taxon>Campylobacter</taxon>
    </lineage>
</organism>
<proteinExistence type="inferred from homology"/>
<comment type="function">
    <text evidence="1">Binds 23S rRNA and is also seen to make contacts with the A and possibly P site tRNAs.</text>
</comment>
<comment type="subunit">
    <text evidence="1">Part of the 50S ribosomal subunit.</text>
</comment>
<comment type="similarity">
    <text evidence="1">Belongs to the universal ribosomal protein uL16 family.</text>
</comment>
<name>RL16_CAMJD</name>
<reference key="1">
    <citation type="submission" date="2007-07" db="EMBL/GenBank/DDBJ databases">
        <title>Complete genome sequence of Campylobacter jejuni subsp doylei 269.97 isolated from human blood.</title>
        <authorList>
            <person name="Fouts D.E."/>
            <person name="Mongodin E.F."/>
            <person name="Puiu D."/>
            <person name="Sebastian Y."/>
            <person name="Miller W.G."/>
            <person name="Mandrell R.E."/>
            <person name="Lastovica A.J."/>
            <person name="Nelson K.E."/>
        </authorList>
    </citation>
    <scope>NUCLEOTIDE SEQUENCE [LARGE SCALE GENOMIC DNA]</scope>
    <source>
        <strain>ATCC BAA-1458 / RM4099 / 269.97</strain>
    </source>
</reference>
<dbReference type="EMBL" id="CP000768">
    <property type="protein sequence ID" value="ABS43357.1"/>
    <property type="molecule type" value="Genomic_DNA"/>
</dbReference>
<dbReference type="SMR" id="A7H649"/>
<dbReference type="KEGG" id="cjd:JJD26997_2074"/>
<dbReference type="HOGENOM" id="CLU_078858_2_1_7"/>
<dbReference type="Proteomes" id="UP000002302">
    <property type="component" value="Chromosome"/>
</dbReference>
<dbReference type="GO" id="GO:0022625">
    <property type="term" value="C:cytosolic large ribosomal subunit"/>
    <property type="evidence" value="ECO:0007669"/>
    <property type="project" value="TreeGrafter"/>
</dbReference>
<dbReference type="GO" id="GO:0019843">
    <property type="term" value="F:rRNA binding"/>
    <property type="evidence" value="ECO:0007669"/>
    <property type="project" value="UniProtKB-UniRule"/>
</dbReference>
<dbReference type="GO" id="GO:0003735">
    <property type="term" value="F:structural constituent of ribosome"/>
    <property type="evidence" value="ECO:0007669"/>
    <property type="project" value="InterPro"/>
</dbReference>
<dbReference type="GO" id="GO:0000049">
    <property type="term" value="F:tRNA binding"/>
    <property type="evidence" value="ECO:0007669"/>
    <property type="project" value="UniProtKB-KW"/>
</dbReference>
<dbReference type="GO" id="GO:0006412">
    <property type="term" value="P:translation"/>
    <property type="evidence" value="ECO:0007669"/>
    <property type="project" value="UniProtKB-UniRule"/>
</dbReference>
<dbReference type="CDD" id="cd01433">
    <property type="entry name" value="Ribosomal_L16_L10e"/>
    <property type="match status" value="1"/>
</dbReference>
<dbReference type="FunFam" id="3.90.1170.10:FF:000001">
    <property type="entry name" value="50S ribosomal protein L16"/>
    <property type="match status" value="1"/>
</dbReference>
<dbReference type="Gene3D" id="3.90.1170.10">
    <property type="entry name" value="Ribosomal protein L10e/L16"/>
    <property type="match status" value="1"/>
</dbReference>
<dbReference type="HAMAP" id="MF_01342">
    <property type="entry name" value="Ribosomal_uL16"/>
    <property type="match status" value="1"/>
</dbReference>
<dbReference type="InterPro" id="IPR047873">
    <property type="entry name" value="Ribosomal_uL16"/>
</dbReference>
<dbReference type="InterPro" id="IPR000114">
    <property type="entry name" value="Ribosomal_uL16_bact-type"/>
</dbReference>
<dbReference type="InterPro" id="IPR020798">
    <property type="entry name" value="Ribosomal_uL16_CS"/>
</dbReference>
<dbReference type="InterPro" id="IPR016180">
    <property type="entry name" value="Ribosomal_uL16_dom"/>
</dbReference>
<dbReference type="InterPro" id="IPR036920">
    <property type="entry name" value="Ribosomal_uL16_sf"/>
</dbReference>
<dbReference type="NCBIfam" id="TIGR01164">
    <property type="entry name" value="rplP_bact"/>
    <property type="match status" value="1"/>
</dbReference>
<dbReference type="PANTHER" id="PTHR12220">
    <property type="entry name" value="50S/60S RIBOSOMAL PROTEIN L16"/>
    <property type="match status" value="1"/>
</dbReference>
<dbReference type="PANTHER" id="PTHR12220:SF13">
    <property type="entry name" value="LARGE RIBOSOMAL SUBUNIT PROTEIN UL16M"/>
    <property type="match status" value="1"/>
</dbReference>
<dbReference type="Pfam" id="PF00252">
    <property type="entry name" value="Ribosomal_L16"/>
    <property type="match status" value="1"/>
</dbReference>
<dbReference type="PRINTS" id="PR00060">
    <property type="entry name" value="RIBOSOMALL16"/>
</dbReference>
<dbReference type="SUPFAM" id="SSF54686">
    <property type="entry name" value="Ribosomal protein L16p/L10e"/>
    <property type="match status" value="1"/>
</dbReference>
<dbReference type="PROSITE" id="PS00701">
    <property type="entry name" value="RIBOSOMAL_L16_2"/>
    <property type="match status" value="1"/>
</dbReference>
<protein>
    <recommendedName>
        <fullName evidence="1">Large ribosomal subunit protein uL16</fullName>
    </recommendedName>
    <alternativeName>
        <fullName evidence="2">50S ribosomal protein L16</fullName>
    </alternativeName>
</protein>
<gene>
    <name evidence="1" type="primary">rplP</name>
    <name type="ordered locus">JJD26997_2074</name>
</gene>
<feature type="chain" id="PRO_1000054600" description="Large ribosomal subunit protein uL16">
    <location>
        <begin position="1"/>
        <end position="141"/>
    </location>
</feature>
<sequence length="141" mass="16375">MLMPKRTKYRKMMKGRNRGYANRGTEFTFGEFALKATEAGRINSRQIEAARIALTRFVKRQGKTWIRVFPDKPLTKKPLETRMGKGKGAVEEWVMNIKPGRIIYEMAGVSEEMAREALTLAMHKLPFKTKFVTRESQNEIY</sequence>
<keyword id="KW-0687">Ribonucleoprotein</keyword>
<keyword id="KW-0689">Ribosomal protein</keyword>
<keyword id="KW-0694">RNA-binding</keyword>
<keyword id="KW-0699">rRNA-binding</keyword>
<keyword id="KW-0820">tRNA-binding</keyword>
<accession>A7H649</accession>
<evidence type="ECO:0000255" key="1">
    <source>
        <dbReference type="HAMAP-Rule" id="MF_01342"/>
    </source>
</evidence>
<evidence type="ECO:0000305" key="2"/>